<proteinExistence type="inferred from homology"/>
<reference key="1">
    <citation type="journal article" date="2008" name="J. Bacteriol.">
        <title>The pangenome structure of Escherichia coli: comparative genomic analysis of E. coli commensal and pathogenic isolates.</title>
        <authorList>
            <person name="Rasko D.A."/>
            <person name="Rosovitz M.J."/>
            <person name="Myers G.S.A."/>
            <person name="Mongodin E.F."/>
            <person name="Fricke W.F."/>
            <person name="Gajer P."/>
            <person name="Crabtree J."/>
            <person name="Sebaihia M."/>
            <person name="Thomson N.R."/>
            <person name="Chaudhuri R."/>
            <person name="Henderson I.R."/>
            <person name="Sperandio V."/>
            <person name="Ravel J."/>
        </authorList>
    </citation>
    <scope>NUCLEOTIDE SEQUENCE [LARGE SCALE GENOMIC DNA]</scope>
    <source>
        <strain>HS</strain>
    </source>
</reference>
<accession>A7ZW48</accession>
<feature type="chain" id="PRO_1000060738" description="UDP-3-O-acyl-N-acetylglucosamine deacetylase">
    <location>
        <begin position="1"/>
        <end position="305"/>
    </location>
</feature>
<feature type="active site" description="Proton donor" evidence="1">
    <location>
        <position position="265"/>
    </location>
</feature>
<feature type="binding site" evidence="1">
    <location>
        <position position="79"/>
    </location>
    <ligand>
        <name>Zn(2+)</name>
        <dbReference type="ChEBI" id="CHEBI:29105"/>
    </ligand>
</feature>
<feature type="binding site" evidence="1">
    <location>
        <position position="238"/>
    </location>
    <ligand>
        <name>Zn(2+)</name>
        <dbReference type="ChEBI" id="CHEBI:29105"/>
    </ligand>
</feature>
<feature type="binding site" evidence="1">
    <location>
        <position position="242"/>
    </location>
    <ligand>
        <name>Zn(2+)</name>
        <dbReference type="ChEBI" id="CHEBI:29105"/>
    </ligand>
</feature>
<sequence length="305" mass="33956">MIKQRTLKRIVQATGVGLHTGKKVTLTLRPAPANTGVIYRRTDLNPPVDFPADAKSVRDTMLCTCLVNEHDVRISTVEHLNAALAGLGIDNIVIEVNAPEIPIMDGSAAPFVYLLLDAGIDELNCAKKFVRIKETVRVEDGDKWAEFKPYNGFSLDFTIDFNHPAIDSSNQRYAMNFSADAFMRQISRARTFGFMRDIEYLQSRGLCLGGSFDCAIVVDDYRVLNEDGLRFEDEFVRHKMLDAIGDLFMCGHNIIGAFTAYKSGHALNNKLLQAVLAKQEAWEYVTFQDDAELPLAFKAPSAVLA</sequence>
<keyword id="KW-0378">Hydrolase</keyword>
<keyword id="KW-0441">Lipid A biosynthesis</keyword>
<keyword id="KW-0444">Lipid biosynthesis</keyword>
<keyword id="KW-0443">Lipid metabolism</keyword>
<keyword id="KW-0479">Metal-binding</keyword>
<keyword id="KW-0862">Zinc</keyword>
<dbReference type="EC" id="3.5.1.108" evidence="1"/>
<dbReference type="EMBL" id="CP000802">
    <property type="protein sequence ID" value="ABV04502.1"/>
    <property type="molecule type" value="Genomic_DNA"/>
</dbReference>
<dbReference type="RefSeq" id="WP_000595482.1">
    <property type="nucleotide sequence ID" value="NC_009800.1"/>
</dbReference>
<dbReference type="BMRB" id="A7ZW48"/>
<dbReference type="SMR" id="A7ZW48"/>
<dbReference type="GeneID" id="93777338"/>
<dbReference type="KEGG" id="ecx:EcHS_A0102"/>
<dbReference type="HOGENOM" id="CLU_046528_1_0_6"/>
<dbReference type="UniPathway" id="UPA00359">
    <property type="reaction ID" value="UER00478"/>
</dbReference>
<dbReference type="GO" id="GO:0016020">
    <property type="term" value="C:membrane"/>
    <property type="evidence" value="ECO:0007669"/>
    <property type="project" value="GOC"/>
</dbReference>
<dbReference type="GO" id="GO:0046872">
    <property type="term" value="F:metal ion binding"/>
    <property type="evidence" value="ECO:0007669"/>
    <property type="project" value="UniProtKB-KW"/>
</dbReference>
<dbReference type="GO" id="GO:0103117">
    <property type="term" value="F:UDP-3-O-acyl-N-acetylglucosamine deacetylase activity"/>
    <property type="evidence" value="ECO:0007669"/>
    <property type="project" value="UniProtKB-UniRule"/>
</dbReference>
<dbReference type="GO" id="GO:0009245">
    <property type="term" value="P:lipid A biosynthetic process"/>
    <property type="evidence" value="ECO:0007669"/>
    <property type="project" value="UniProtKB-UniRule"/>
</dbReference>
<dbReference type="FunFam" id="3.30.1700.10:FF:000001">
    <property type="entry name" value="UDP-3-O-acyl-N-acetylglucosamine deacetylase"/>
    <property type="match status" value="1"/>
</dbReference>
<dbReference type="FunFam" id="3.30.230.20:FF:000001">
    <property type="entry name" value="UDP-3-O-acyl-N-acetylglucosamine deacetylase"/>
    <property type="match status" value="1"/>
</dbReference>
<dbReference type="Gene3D" id="3.30.230.20">
    <property type="entry name" value="lpxc deacetylase, domain 1"/>
    <property type="match status" value="1"/>
</dbReference>
<dbReference type="Gene3D" id="3.30.1700.10">
    <property type="entry name" value="lpxc deacetylase, domain 2"/>
    <property type="match status" value="1"/>
</dbReference>
<dbReference type="HAMAP" id="MF_00388">
    <property type="entry name" value="LpxC"/>
    <property type="match status" value="1"/>
</dbReference>
<dbReference type="InterPro" id="IPR020568">
    <property type="entry name" value="Ribosomal_Su5_D2-typ_SF"/>
</dbReference>
<dbReference type="InterPro" id="IPR004463">
    <property type="entry name" value="UDP-acyl_GlcNac_deAcase"/>
</dbReference>
<dbReference type="InterPro" id="IPR011334">
    <property type="entry name" value="UDP-acyl_GlcNac_deAcase_C"/>
</dbReference>
<dbReference type="InterPro" id="IPR015870">
    <property type="entry name" value="UDP-acyl_N-AcGlcN_deAcase_N"/>
</dbReference>
<dbReference type="NCBIfam" id="TIGR00325">
    <property type="entry name" value="lpxC"/>
    <property type="match status" value="1"/>
</dbReference>
<dbReference type="PANTHER" id="PTHR33694">
    <property type="entry name" value="UDP-3-O-ACYL-N-ACETYLGLUCOSAMINE DEACETYLASE 1, MITOCHONDRIAL-RELATED"/>
    <property type="match status" value="1"/>
</dbReference>
<dbReference type="PANTHER" id="PTHR33694:SF1">
    <property type="entry name" value="UDP-3-O-ACYL-N-ACETYLGLUCOSAMINE DEACETYLASE 1, MITOCHONDRIAL-RELATED"/>
    <property type="match status" value="1"/>
</dbReference>
<dbReference type="Pfam" id="PF03331">
    <property type="entry name" value="LpxC"/>
    <property type="match status" value="1"/>
</dbReference>
<dbReference type="SUPFAM" id="SSF54211">
    <property type="entry name" value="Ribosomal protein S5 domain 2-like"/>
    <property type="match status" value="2"/>
</dbReference>
<name>LPXC_ECOHS</name>
<gene>
    <name evidence="1" type="primary">lpxC</name>
    <name type="ordered locus">EcHS_A0102</name>
</gene>
<evidence type="ECO:0000255" key="1">
    <source>
        <dbReference type="HAMAP-Rule" id="MF_00388"/>
    </source>
</evidence>
<protein>
    <recommendedName>
        <fullName evidence="1">UDP-3-O-acyl-N-acetylglucosamine deacetylase</fullName>
        <shortName evidence="1">UDP-3-O-acyl-GlcNAc deacetylase</shortName>
        <ecNumber evidence="1">3.5.1.108</ecNumber>
    </recommendedName>
    <alternativeName>
        <fullName evidence="1">UDP-3-O-[R-3-hydroxymyristoyl]-N-acetylglucosamine deacetylase</fullName>
    </alternativeName>
</protein>
<organism>
    <name type="scientific">Escherichia coli O9:H4 (strain HS)</name>
    <dbReference type="NCBI Taxonomy" id="331112"/>
    <lineage>
        <taxon>Bacteria</taxon>
        <taxon>Pseudomonadati</taxon>
        <taxon>Pseudomonadota</taxon>
        <taxon>Gammaproteobacteria</taxon>
        <taxon>Enterobacterales</taxon>
        <taxon>Enterobacteriaceae</taxon>
        <taxon>Escherichia</taxon>
    </lineage>
</organism>
<comment type="function">
    <text evidence="1">Catalyzes the hydrolysis of UDP-3-O-myristoyl-N-acetylglucosamine to form UDP-3-O-myristoylglucosamine and acetate, the committed step in lipid A biosynthesis.</text>
</comment>
<comment type="catalytic activity">
    <reaction evidence="1">
        <text>a UDP-3-O-[(3R)-3-hydroxyacyl]-N-acetyl-alpha-D-glucosamine + H2O = a UDP-3-O-[(3R)-3-hydroxyacyl]-alpha-D-glucosamine + acetate</text>
        <dbReference type="Rhea" id="RHEA:67816"/>
        <dbReference type="ChEBI" id="CHEBI:15377"/>
        <dbReference type="ChEBI" id="CHEBI:30089"/>
        <dbReference type="ChEBI" id="CHEBI:137740"/>
        <dbReference type="ChEBI" id="CHEBI:173225"/>
        <dbReference type="EC" id="3.5.1.108"/>
    </reaction>
</comment>
<comment type="cofactor">
    <cofactor evidence="1">
        <name>Zn(2+)</name>
        <dbReference type="ChEBI" id="CHEBI:29105"/>
    </cofactor>
</comment>
<comment type="pathway">
    <text evidence="1">Glycolipid biosynthesis; lipid IV(A) biosynthesis; lipid IV(A) from (3R)-3-hydroxytetradecanoyl-[acyl-carrier-protein] and UDP-N-acetyl-alpha-D-glucosamine: step 2/6.</text>
</comment>
<comment type="similarity">
    <text evidence="1">Belongs to the LpxC family.</text>
</comment>